<organism>
    <name type="scientific">Salmonella enteritidis PT4 (strain P125109)</name>
    <dbReference type="NCBI Taxonomy" id="550537"/>
    <lineage>
        <taxon>Bacteria</taxon>
        <taxon>Pseudomonadati</taxon>
        <taxon>Pseudomonadota</taxon>
        <taxon>Gammaproteobacteria</taxon>
        <taxon>Enterobacterales</taxon>
        <taxon>Enterobacteriaceae</taxon>
        <taxon>Salmonella</taxon>
    </lineage>
</organism>
<dbReference type="EC" id="2.3.1.47" evidence="1"/>
<dbReference type="EMBL" id="AM933172">
    <property type="protein sequence ID" value="CAR32326.1"/>
    <property type="molecule type" value="Genomic_DNA"/>
</dbReference>
<dbReference type="RefSeq" id="WP_000118943.1">
    <property type="nucleotide sequence ID" value="NC_011294.1"/>
</dbReference>
<dbReference type="SMR" id="B5QX66"/>
<dbReference type="KEGG" id="set:SEN0740"/>
<dbReference type="HOGENOM" id="CLU_015846_11_2_6"/>
<dbReference type="UniPathway" id="UPA00078"/>
<dbReference type="Proteomes" id="UP000000613">
    <property type="component" value="Chromosome"/>
</dbReference>
<dbReference type="GO" id="GO:0008710">
    <property type="term" value="F:8-amino-7-oxononanoate synthase activity"/>
    <property type="evidence" value="ECO:0007669"/>
    <property type="project" value="UniProtKB-UniRule"/>
</dbReference>
<dbReference type="GO" id="GO:0030170">
    <property type="term" value="F:pyridoxal phosphate binding"/>
    <property type="evidence" value="ECO:0007669"/>
    <property type="project" value="UniProtKB-UniRule"/>
</dbReference>
<dbReference type="GO" id="GO:0009102">
    <property type="term" value="P:biotin biosynthetic process"/>
    <property type="evidence" value="ECO:0007669"/>
    <property type="project" value="UniProtKB-UniRule"/>
</dbReference>
<dbReference type="CDD" id="cd06454">
    <property type="entry name" value="KBL_like"/>
    <property type="match status" value="1"/>
</dbReference>
<dbReference type="FunFam" id="3.40.640.10:FF:000095">
    <property type="entry name" value="8-amino-7-oxononanoate synthase"/>
    <property type="match status" value="1"/>
</dbReference>
<dbReference type="Gene3D" id="3.90.1150.10">
    <property type="entry name" value="Aspartate Aminotransferase, domain 1"/>
    <property type="match status" value="1"/>
</dbReference>
<dbReference type="Gene3D" id="3.40.640.10">
    <property type="entry name" value="Type I PLP-dependent aspartate aminotransferase-like (Major domain)"/>
    <property type="match status" value="1"/>
</dbReference>
<dbReference type="HAMAP" id="MF_01693">
    <property type="entry name" value="BioF_aminotrans_2"/>
    <property type="match status" value="1"/>
</dbReference>
<dbReference type="InterPro" id="IPR001917">
    <property type="entry name" value="Aminotrans_II_pyridoxalP_BS"/>
</dbReference>
<dbReference type="InterPro" id="IPR004839">
    <property type="entry name" value="Aminotransferase_I/II_large"/>
</dbReference>
<dbReference type="InterPro" id="IPR050087">
    <property type="entry name" value="AON_synthase_class-II"/>
</dbReference>
<dbReference type="InterPro" id="IPR004723">
    <property type="entry name" value="AONS_Archaea/Proteobacteria"/>
</dbReference>
<dbReference type="InterPro" id="IPR022834">
    <property type="entry name" value="AONS_Proteobacteria"/>
</dbReference>
<dbReference type="InterPro" id="IPR015424">
    <property type="entry name" value="PyrdxlP-dep_Trfase"/>
</dbReference>
<dbReference type="InterPro" id="IPR015421">
    <property type="entry name" value="PyrdxlP-dep_Trfase_major"/>
</dbReference>
<dbReference type="InterPro" id="IPR015422">
    <property type="entry name" value="PyrdxlP-dep_Trfase_small"/>
</dbReference>
<dbReference type="NCBIfam" id="TIGR00858">
    <property type="entry name" value="bioF"/>
    <property type="match status" value="1"/>
</dbReference>
<dbReference type="PANTHER" id="PTHR13693:SF100">
    <property type="entry name" value="8-AMINO-7-OXONONANOATE SYNTHASE"/>
    <property type="match status" value="1"/>
</dbReference>
<dbReference type="PANTHER" id="PTHR13693">
    <property type="entry name" value="CLASS II AMINOTRANSFERASE/8-AMINO-7-OXONONANOATE SYNTHASE"/>
    <property type="match status" value="1"/>
</dbReference>
<dbReference type="Pfam" id="PF00155">
    <property type="entry name" value="Aminotran_1_2"/>
    <property type="match status" value="1"/>
</dbReference>
<dbReference type="SUPFAM" id="SSF53383">
    <property type="entry name" value="PLP-dependent transferases"/>
    <property type="match status" value="1"/>
</dbReference>
<dbReference type="PROSITE" id="PS00599">
    <property type="entry name" value="AA_TRANSFER_CLASS_2"/>
    <property type="match status" value="1"/>
</dbReference>
<proteinExistence type="inferred from homology"/>
<evidence type="ECO:0000255" key="1">
    <source>
        <dbReference type="HAMAP-Rule" id="MF_01693"/>
    </source>
</evidence>
<accession>B5QX66</accession>
<comment type="function">
    <text evidence="1">Catalyzes the decarboxylative condensation of pimeloyl-[acyl-carrier protein] and L-alanine to produce 8-amino-7-oxononanoate (AON), [acyl-carrier protein], and carbon dioxide.</text>
</comment>
<comment type="catalytic activity">
    <reaction evidence="1">
        <text>6-carboxyhexanoyl-[ACP] + L-alanine + H(+) = (8S)-8-amino-7-oxononanoate + holo-[ACP] + CO2</text>
        <dbReference type="Rhea" id="RHEA:42288"/>
        <dbReference type="Rhea" id="RHEA-COMP:9685"/>
        <dbReference type="Rhea" id="RHEA-COMP:9955"/>
        <dbReference type="ChEBI" id="CHEBI:15378"/>
        <dbReference type="ChEBI" id="CHEBI:16526"/>
        <dbReference type="ChEBI" id="CHEBI:57972"/>
        <dbReference type="ChEBI" id="CHEBI:64479"/>
        <dbReference type="ChEBI" id="CHEBI:78846"/>
        <dbReference type="ChEBI" id="CHEBI:149468"/>
        <dbReference type="EC" id="2.3.1.47"/>
    </reaction>
</comment>
<comment type="cofactor">
    <cofactor evidence="1">
        <name>pyridoxal 5'-phosphate</name>
        <dbReference type="ChEBI" id="CHEBI:597326"/>
    </cofactor>
</comment>
<comment type="pathway">
    <text evidence="1">Cofactor biosynthesis; biotin biosynthesis.</text>
</comment>
<comment type="subunit">
    <text evidence="1">Homodimer.</text>
</comment>
<comment type="similarity">
    <text evidence="1">Belongs to the class-II pyridoxal-phosphate-dependent aminotransferase family. BioF subfamily.</text>
</comment>
<feature type="chain" id="PRO_0000381096" description="8-amino-7-oxononanoate synthase">
    <location>
        <begin position="1"/>
        <end position="385"/>
    </location>
</feature>
<feature type="binding site" evidence="1">
    <location>
        <position position="21"/>
    </location>
    <ligand>
        <name>substrate</name>
    </ligand>
</feature>
<feature type="binding site" evidence="1">
    <location>
        <begin position="108"/>
        <end position="109"/>
    </location>
    <ligand>
        <name>pyridoxal 5'-phosphate</name>
        <dbReference type="ChEBI" id="CHEBI:597326"/>
    </ligand>
</feature>
<feature type="binding site" evidence="1">
    <location>
        <position position="133"/>
    </location>
    <ligand>
        <name>substrate</name>
    </ligand>
</feature>
<feature type="binding site" evidence="1">
    <location>
        <position position="179"/>
    </location>
    <ligand>
        <name>pyridoxal 5'-phosphate</name>
        <dbReference type="ChEBI" id="CHEBI:597326"/>
    </ligand>
</feature>
<feature type="binding site" evidence="1">
    <location>
        <position position="207"/>
    </location>
    <ligand>
        <name>pyridoxal 5'-phosphate</name>
        <dbReference type="ChEBI" id="CHEBI:597326"/>
    </ligand>
</feature>
<feature type="binding site" evidence="1">
    <location>
        <position position="233"/>
    </location>
    <ligand>
        <name>pyridoxal 5'-phosphate</name>
        <dbReference type="ChEBI" id="CHEBI:597326"/>
    </ligand>
</feature>
<feature type="binding site" evidence="1">
    <location>
        <position position="352"/>
    </location>
    <ligand>
        <name>substrate</name>
    </ligand>
</feature>
<feature type="modified residue" description="N6-(pyridoxal phosphate)lysine" evidence="1">
    <location>
        <position position="236"/>
    </location>
</feature>
<sequence length="385" mass="42042">MSWQQRVDDALTARRATDTLRRRYVVSQGAGRWLVANGRQYLNFSSNDYLGLSQHPQIIRAWQQAATRFGVGSGGSGHISGYSVAHQALEEELAQWLGYPRALLFISGFAANQAVITALMKKNDRIVADRLSHASLLEAANLSPAQLRRFIHNDTQHLSRLLQSPCVGQQLVVTEGVYSMDGDSAPLAEIQHIARRHHAWLLVDDAHGIGVTGDEGRGTCWQRGVKPELLVVTFGKGFGVSGAAVLCSESVADYLLQFARHLVYSTSMPPAQAQALSASLAVIRSDEGRERREKLAALVQRFRAGVNASRFTLLNAHSAIQPLIVGDNSRALRLAEALRQQGCWATAIRPPTVPVGTARLRLTLTQAHEACDIDRLLEVLHGAGE</sequence>
<gene>
    <name evidence="1" type="primary">bioF</name>
    <name type="ordered locus">SEN0740</name>
</gene>
<keyword id="KW-0093">Biotin biosynthesis</keyword>
<keyword id="KW-0663">Pyridoxal phosphate</keyword>
<keyword id="KW-0808">Transferase</keyword>
<protein>
    <recommendedName>
        <fullName evidence="1">8-amino-7-oxononanoate synthase</fullName>
        <shortName evidence="1">AONS</shortName>
        <ecNumber evidence="1">2.3.1.47</ecNumber>
    </recommendedName>
    <alternativeName>
        <fullName evidence="1">7-keto-8-amino-pelargonic acid synthase</fullName>
        <shortName evidence="1">7-KAP synthase</shortName>
        <shortName evidence="1">KAPA synthase</shortName>
    </alternativeName>
    <alternativeName>
        <fullName evidence="1">8-amino-7-ketopelargonate synthase</fullName>
    </alternativeName>
</protein>
<reference key="1">
    <citation type="journal article" date="2008" name="Genome Res.">
        <title>Comparative genome analysis of Salmonella enteritidis PT4 and Salmonella gallinarum 287/91 provides insights into evolutionary and host adaptation pathways.</title>
        <authorList>
            <person name="Thomson N.R."/>
            <person name="Clayton D.J."/>
            <person name="Windhorst D."/>
            <person name="Vernikos G."/>
            <person name="Davidson S."/>
            <person name="Churcher C."/>
            <person name="Quail M.A."/>
            <person name="Stevens M."/>
            <person name="Jones M.A."/>
            <person name="Watson M."/>
            <person name="Barron A."/>
            <person name="Layton A."/>
            <person name="Pickard D."/>
            <person name="Kingsley R.A."/>
            <person name="Bignell A."/>
            <person name="Clark L."/>
            <person name="Harris B."/>
            <person name="Ormond D."/>
            <person name="Abdellah Z."/>
            <person name="Brooks K."/>
            <person name="Cherevach I."/>
            <person name="Chillingworth T."/>
            <person name="Woodward J."/>
            <person name="Norberczak H."/>
            <person name="Lord A."/>
            <person name="Arrowsmith C."/>
            <person name="Jagels K."/>
            <person name="Moule S."/>
            <person name="Mungall K."/>
            <person name="Saunders M."/>
            <person name="Whitehead S."/>
            <person name="Chabalgoity J.A."/>
            <person name="Maskell D."/>
            <person name="Humphreys T."/>
            <person name="Roberts M."/>
            <person name="Barrow P.A."/>
            <person name="Dougan G."/>
            <person name="Parkhill J."/>
        </authorList>
    </citation>
    <scope>NUCLEOTIDE SEQUENCE [LARGE SCALE GENOMIC DNA]</scope>
    <source>
        <strain>P125109</strain>
    </source>
</reference>
<name>BIOF_SALEP</name>